<organism>
    <name type="scientific">Streptococcus pyogenes serotype M3 (strain ATCC BAA-595 / MGAS315)</name>
    <dbReference type="NCBI Taxonomy" id="198466"/>
    <lineage>
        <taxon>Bacteria</taxon>
        <taxon>Bacillati</taxon>
        <taxon>Bacillota</taxon>
        <taxon>Bacilli</taxon>
        <taxon>Lactobacillales</taxon>
        <taxon>Streptococcaceae</taxon>
        <taxon>Streptococcus</taxon>
    </lineage>
</organism>
<sequence>MFAQLDTKTVYSFMDSLIDLNHYFERAKQFGYHTIGIMDKDNLYGAYHFIKGCQKNGLQPVLGLEVEILYQERQVLLNLIAQNTQGYHQLLKISTAKMSGKLHMDYLCQHLEGIAVIIPSKGWSDTLVVPFDYYIGVDQYTDLSHMDSKRQLIPLRTVRYFAQDDMETLHMLHAIRDNLSLAETPVVESDQELTDCQQLTTFYQTHCPQALQNLEDLVSGIYYDFDTNLKLPHFNRDKSAKQELQELTEAGLKEKGLWKEPYQSRLLHELVIISDMGFDDYFLIVWDLLRFGRSKGYYMGMGRGSAAGSLVAYALNITGIDPVQHDLLFERFLNKERYSMPDIDIDLPDIYRSEFLRYVRNRYGSDHSAQIVTFSTFGPKQAIRDVFKRFGVPEYELTNLTKKIGFKDSLATVYEKSISFRQVINSRTEFQKAFAIAKRIEGNPRQTSIHAAGIVMSDDTLTNHIPLKSGDDMMITQYDAHAIEANGLLKMDFLGLRNLTFVQKMQEKVAKDYGCQIDIAAIDLEDPQTLALFAKGDTKGIFQFEQNGAINLLKRIKPQRFEEIVATTSLNRPGASDYTTNFIKRREGQEKIDLIDPVIAPILEPTYGIMLYQEQVMQIAQIYAGFTLGKADLLRRAMSKKNLQEMQKMEEDFIASAKHLGRAEETARGLFKRMEKFAGYGFNRSHAFAYSALAFQLAYFKAHYPAVFYDIMMNYSSSDYITDALESDFQVAQVTINSIPYTDKIEASKIYMGLKNIKGLPRDFAYWIIEQRPFNSVEDFLTRTPEKYQKKVFLEPLIKIGLFDCFEPNRKKILDNLDGLLVFVNELGSLFSDSSFSWVDAKDYSATEKYSLEQEIVGVGMSKHPLIDIAEKSTQTFTPISQLVKESEAVVLIQIDSIRIIRTKTSGQQMAFLSVNDTKKKLDVTLFPQEYAIYKDQLIEGEFYYLKGRIKERDHRLQMVCQQVQMAISQKYWLLVENHQFDSQISEILGAFPGTTPVVIHYQKNKETIALTKIQVHVTENLKEKLRPFVLKTVFR</sequence>
<protein>
    <recommendedName>
        <fullName>DNA polymerase III subunit alpha</fullName>
        <ecNumber>2.7.7.7</ecNumber>
    </recommendedName>
</protein>
<reference key="1">
    <citation type="journal article" date="2002" name="Proc. Natl. Acad. Sci. U.S.A.">
        <title>Genome sequence of a serotype M3 strain of group A Streptococcus: phage-encoded toxins, the high-virulence phenotype, and clone emergence.</title>
        <authorList>
            <person name="Beres S.B."/>
            <person name="Sylva G.L."/>
            <person name="Barbian K.D."/>
            <person name="Lei B."/>
            <person name="Hoff J.S."/>
            <person name="Mammarella N.D."/>
            <person name="Liu M.-Y."/>
            <person name="Smoot J.C."/>
            <person name="Porcella S.F."/>
            <person name="Parkins L.D."/>
            <person name="Campbell D.S."/>
            <person name="Smith T.M."/>
            <person name="McCormick J.K."/>
            <person name="Leung D.Y.M."/>
            <person name="Schlievert P.M."/>
            <person name="Musser J.M."/>
        </authorList>
    </citation>
    <scope>NUCLEOTIDE SEQUENCE [LARGE SCALE GENOMIC DNA]</scope>
    <source>
        <strain>ATCC BAA-595 / MGAS315</strain>
    </source>
</reference>
<gene>
    <name type="primary">dnaE</name>
    <name type="ordered locus">SpyM3_0914</name>
</gene>
<dbReference type="EC" id="2.7.7.7"/>
<dbReference type="EMBL" id="AE014074">
    <property type="protein sequence ID" value="AAM79521.1"/>
    <property type="molecule type" value="Genomic_DNA"/>
</dbReference>
<dbReference type="RefSeq" id="WP_011054545.1">
    <property type="nucleotide sequence ID" value="NC_004070.1"/>
</dbReference>
<dbReference type="SMR" id="P0DA74"/>
<dbReference type="KEGG" id="spg:SpyM3_0914"/>
<dbReference type="HOGENOM" id="CLU_001600_0_0_9"/>
<dbReference type="Proteomes" id="UP000000564">
    <property type="component" value="Chromosome"/>
</dbReference>
<dbReference type="GO" id="GO:0005737">
    <property type="term" value="C:cytoplasm"/>
    <property type="evidence" value="ECO:0007669"/>
    <property type="project" value="UniProtKB-SubCell"/>
</dbReference>
<dbReference type="GO" id="GO:0008408">
    <property type="term" value="F:3'-5' exonuclease activity"/>
    <property type="evidence" value="ECO:0007669"/>
    <property type="project" value="InterPro"/>
</dbReference>
<dbReference type="GO" id="GO:0003887">
    <property type="term" value="F:DNA-directed DNA polymerase activity"/>
    <property type="evidence" value="ECO:0007669"/>
    <property type="project" value="UniProtKB-KW"/>
</dbReference>
<dbReference type="GO" id="GO:0003676">
    <property type="term" value="F:nucleic acid binding"/>
    <property type="evidence" value="ECO:0007669"/>
    <property type="project" value="InterPro"/>
</dbReference>
<dbReference type="GO" id="GO:0006260">
    <property type="term" value="P:DNA replication"/>
    <property type="evidence" value="ECO:0007669"/>
    <property type="project" value="UniProtKB-KW"/>
</dbReference>
<dbReference type="CDD" id="cd04485">
    <property type="entry name" value="DnaE_OBF"/>
    <property type="match status" value="1"/>
</dbReference>
<dbReference type="CDD" id="cd07431">
    <property type="entry name" value="PHP_PolIIIA"/>
    <property type="match status" value="1"/>
</dbReference>
<dbReference type="Gene3D" id="1.10.150.870">
    <property type="match status" value="1"/>
</dbReference>
<dbReference type="Gene3D" id="1.10.10.1600">
    <property type="entry name" value="Bacterial DNA polymerase III alpha subunit, thumb domain"/>
    <property type="match status" value="1"/>
</dbReference>
<dbReference type="Gene3D" id="3.20.20.140">
    <property type="entry name" value="Metal-dependent hydrolases"/>
    <property type="match status" value="1"/>
</dbReference>
<dbReference type="Gene3D" id="2.40.50.140">
    <property type="entry name" value="Nucleic acid-binding proteins"/>
    <property type="match status" value="1"/>
</dbReference>
<dbReference type="InterPro" id="IPR011708">
    <property type="entry name" value="DNA_pol3_alpha_NTPase_dom"/>
</dbReference>
<dbReference type="InterPro" id="IPR041931">
    <property type="entry name" value="DNA_pol3_alpha_thumb_dom"/>
</dbReference>
<dbReference type="InterPro" id="IPR040982">
    <property type="entry name" value="DNA_pol3_finger"/>
</dbReference>
<dbReference type="InterPro" id="IPR004805">
    <property type="entry name" value="DnaE2/DnaE/PolC"/>
</dbReference>
<dbReference type="InterPro" id="IPR029460">
    <property type="entry name" value="DNAPol_HHH"/>
</dbReference>
<dbReference type="InterPro" id="IPR012340">
    <property type="entry name" value="NA-bd_OB-fold"/>
</dbReference>
<dbReference type="InterPro" id="IPR004365">
    <property type="entry name" value="NA-bd_OB_tRNA"/>
</dbReference>
<dbReference type="InterPro" id="IPR004013">
    <property type="entry name" value="PHP_dom"/>
</dbReference>
<dbReference type="InterPro" id="IPR003141">
    <property type="entry name" value="Pol/His_phosphatase_N"/>
</dbReference>
<dbReference type="InterPro" id="IPR016195">
    <property type="entry name" value="Pol/histidinol_Pase-like"/>
</dbReference>
<dbReference type="NCBIfam" id="TIGR00594">
    <property type="entry name" value="polc"/>
    <property type="match status" value="1"/>
</dbReference>
<dbReference type="NCBIfam" id="NF005582">
    <property type="entry name" value="PRK07279.1"/>
    <property type="match status" value="1"/>
</dbReference>
<dbReference type="PANTHER" id="PTHR32294">
    <property type="entry name" value="DNA POLYMERASE III SUBUNIT ALPHA"/>
    <property type="match status" value="1"/>
</dbReference>
<dbReference type="PANTHER" id="PTHR32294:SF0">
    <property type="entry name" value="DNA POLYMERASE III SUBUNIT ALPHA"/>
    <property type="match status" value="1"/>
</dbReference>
<dbReference type="Pfam" id="PF07733">
    <property type="entry name" value="DNA_pol3_alpha"/>
    <property type="match status" value="1"/>
</dbReference>
<dbReference type="Pfam" id="PF17657">
    <property type="entry name" value="DNA_pol3_finger"/>
    <property type="match status" value="1"/>
</dbReference>
<dbReference type="Pfam" id="PF14579">
    <property type="entry name" value="HHH_6"/>
    <property type="match status" value="1"/>
</dbReference>
<dbReference type="Pfam" id="PF02811">
    <property type="entry name" value="PHP"/>
    <property type="match status" value="1"/>
</dbReference>
<dbReference type="Pfam" id="PF01336">
    <property type="entry name" value="tRNA_anti-codon"/>
    <property type="match status" value="1"/>
</dbReference>
<dbReference type="SMART" id="SM00481">
    <property type="entry name" value="POLIIIAc"/>
    <property type="match status" value="1"/>
</dbReference>
<dbReference type="SUPFAM" id="SSF89550">
    <property type="entry name" value="PHP domain-like"/>
    <property type="match status" value="1"/>
</dbReference>
<name>DPO3A_STRP3</name>
<comment type="function">
    <text evidence="1">DNA polymerase III is a complex, multichain enzyme responsible for most of the replicative synthesis in bacteria. This DNA polymerase also exhibits 3' to 5' exonuclease activity. The alpha chain is the DNA polymerase (By similarity).</text>
</comment>
<comment type="catalytic activity">
    <reaction>
        <text>DNA(n) + a 2'-deoxyribonucleoside 5'-triphosphate = DNA(n+1) + diphosphate</text>
        <dbReference type="Rhea" id="RHEA:22508"/>
        <dbReference type="Rhea" id="RHEA-COMP:17339"/>
        <dbReference type="Rhea" id="RHEA-COMP:17340"/>
        <dbReference type="ChEBI" id="CHEBI:33019"/>
        <dbReference type="ChEBI" id="CHEBI:61560"/>
        <dbReference type="ChEBI" id="CHEBI:173112"/>
        <dbReference type="EC" id="2.7.7.7"/>
    </reaction>
</comment>
<comment type="subunit">
    <text evidence="1">DNA polymerase III contains a core (composed of alpha, epsilon and theta chains) that associates with a tau subunit. This core dimerizes to form the PolIII' complex. PolIII' associates with the gamma complex (composed of gamma, delta, delta', psi and chi chains) and with the beta chain to form the complete DNA polymerase III complex (By similarity).</text>
</comment>
<comment type="subcellular location">
    <subcellularLocation>
        <location evidence="1">Cytoplasm</location>
    </subcellularLocation>
</comment>
<comment type="similarity">
    <text evidence="2">Belongs to the DNA polymerase type-C family. DnaE subfamily.</text>
</comment>
<feature type="chain" id="PRO_0000103351" description="DNA polymerase III subunit alpha">
    <location>
        <begin position="1"/>
        <end position="1036"/>
    </location>
</feature>
<proteinExistence type="inferred from homology"/>
<accession>P0DA74</accession>
<accession>Q8K7A1</accession>
<keyword id="KW-0963">Cytoplasm</keyword>
<keyword id="KW-0235">DNA replication</keyword>
<keyword id="KW-0239">DNA-directed DNA polymerase</keyword>
<keyword id="KW-0548">Nucleotidyltransferase</keyword>
<keyword id="KW-0808">Transferase</keyword>
<evidence type="ECO:0000250" key="1"/>
<evidence type="ECO:0000305" key="2"/>